<name>VP30_LYCMC</name>
<feature type="signal peptide" evidence="2">
    <location>
        <begin position="1"/>
        <end position="18"/>
    </location>
</feature>
<feature type="chain" id="PRO_0000403910" description="Venom protein 30.1">
    <location>
        <begin position="19"/>
        <end position="145"/>
    </location>
</feature>
<organism>
    <name type="scientific">Lychas mucronatus</name>
    <name type="common">Chinese swimming scorpion</name>
    <dbReference type="NCBI Taxonomy" id="172552"/>
    <lineage>
        <taxon>Eukaryota</taxon>
        <taxon>Metazoa</taxon>
        <taxon>Ecdysozoa</taxon>
        <taxon>Arthropoda</taxon>
        <taxon>Chelicerata</taxon>
        <taxon>Arachnida</taxon>
        <taxon>Scorpiones</taxon>
        <taxon>Buthida</taxon>
        <taxon>Buthoidea</taxon>
        <taxon>Buthidae</taxon>
        <taxon>Lychas</taxon>
    </lineage>
</organism>
<sequence>MIIVKLFTCLLMVSSVLTLNDVRYKYYKTEKVGNKCRYNMFSYLENDESIYEDRLCKMYTCHIMEDDALMQHSMCKLPKGFREGCTVESKTGRFPYCCLNRKMSCPPEERNDDFNVVSVKGPKFPRNKSNDKFKNLSVKNCPCLE</sequence>
<dbReference type="EMBL" id="GT028813">
    <property type="status" value="NOT_ANNOTATED_CDS"/>
    <property type="molecule type" value="mRNA"/>
</dbReference>
<dbReference type="GO" id="GO:0005576">
    <property type="term" value="C:extracellular region"/>
    <property type="evidence" value="ECO:0007669"/>
    <property type="project" value="UniProtKB-SubCell"/>
</dbReference>
<reference key="1">
    <citation type="journal article" date="2010" name="BMC Genomics">
        <title>Comparative venom gland transcriptome analysis of the scorpion Lychas mucronatus reveals intraspecific toxic gene diversity and new venomous components.</title>
        <authorList>
            <person name="Zhao R."/>
            <person name="Ma Y."/>
            <person name="He Y."/>
            <person name="Di Z."/>
            <person name="Wu Y.-L."/>
            <person name="Cao Z.-J."/>
            <person name="Li W.-X."/>
        </authorList>
    </citation>
    <scope>NUCLEOTIDE SEQUENCE [MRNA]</scope>
    <source>
        <strain>Yunnan</strain>
        <tissue>Venom gland</tissue>
    </source>
</reference>
<evidence type="ECO:0000250" key="1"/>
<evidence type="ECO:0000255" key="2"/>
<evidence type="ECO:0000305" key="3"/>
<comment type="subcellular location">
    <subcellularLocation>
        <location evidence="1">Secreted</location>
    </subcellularLocation>
</comment>
<comment type="tissue specificity">
    <text evidence="3">Expressed by the venom gland.</text>
</comment>
<comment type="PTM">
    <text evidence="1">Contains 5 disulfide bonds.</text>
</comment>
<keyword id="KW-1015">Disulfide bond</keyword>
<keyword id="KW-0964">Secreted</keyword>
<keyword id="KW-0732">Signal</keyword>
<proteinExistence type="evidence at transcript level"/>
<accession>P0CJ18</accession>
<protein>
    <recommendedName>
        <fullName>Venom protein 30.1</fullName>
    </recommendedName>
</protein>